<evidence type="ECO:0000255" key="1">
    <source>
        <dbReference type="HAMAP-Rule" id="MF_00412"/>
    </source>
</evidence>
<evidence type="ECO:0000305" key="2"/>
<accession>B0U111</accession>
<gene>
    <name evidence="1" type="primary">proA</name>
    <name type="ordered locus">Fphi_0608</name>
</gene>
<reference key="1">
    <citation type="submission" date="2007-12" db="EMBL/GenBank/DDBJ databases">
        <title>Complete sequence of chromosome of Francisella philomiragia subsp. philomiragia ATCC 25017.</title>
        <authorList>
            <consortium name="US DOE Joint Genome Institute"/>
            <person name="Copeland A."/>
            <person name="Lucas S."/>
            <person name="Lapidus A."/>
            <person name="Barry K."/>
            <person name="Detter J.C."/>
            <person name="Glavina del Rio T."/>
            <person name="Hammon N."/>
            <person name="Israni S."/>
            <person name="Dalin E."/>
            <person name="Tice H."/>
            <person name="Pitluck S."/>
            <person name="Chain P."/>
            <person name="Malfatti S."/>
            <person name="Shin M."/>
            <person name="Vergez L."/>
            <person name="Schmutz J."/>
            <person name="Larimer F."/>
            <person name="Land M."/>
            <person name="Hauser L."/>
            <person name="Richardson P."/>
        </authorList>
    </citation>
    <scope>NUCLEOTIDE SEQUENCE [LARGE SCALE GENOMIC DNA]</scope>
    <source>
        <strain>ATCC 25017 / CCUG 19701 / FSC 153 / O#319-036</strain>
    </source>
</reference>
<feature type="chain" id="PRO_0000340881" description="Gamma-glutamyl phosphate reductase">
    <location>
        <begin position="1"/>
        <end position="414"/>
    </location>
</feature>
<sequence length="414" mass="45516">MSIVEMGKNAKQAAKELAQANTELKNNVLHELEKSLLDNAEYILQQNQKDLDNAKKNNLSKAFVDRLTLTPARIESMAQGVRQIADFADPIGKIEKGFKHPKGMTISQIRVPLGVIAMIFESRPNVTIDAGALALKSGNAIILRGGSDALHTNIALKNIFQEVCEKHGLSKNIVQLVEDIARERVTELVTLDKYIDVIIPRGGKSLKKAIQQQATISMIETGAGICHTYIDEFADLDKAIKIVINAKTQRPGVCNALESLLVHQNIAEKFLPKLEIELAKYNVELRADNESLKYLGNAILATPEDWDTEYLDLVLSIKTVANINEAIEHINTHGSMHSECIVTESYTNTEIFLNEVDAAAVYANASTRFTDGSEFGFGGEIGISTQKLHARGPMGINELTTLKYIIRGNGQVRG</sequence>
<proteinExistence type="inferred from homology"/>
<organism>
    <name type="scientific">Francisella philomiragia subsp. philomiragia (strain ATCC 25017 / CCUG 19701 / FSC 153 / O#319-036)</name>
    <dbReference type="NCBI Taxonomy" id="484022"/>
    <lineage>
        <taxon>Bacteria</taxon>
        <taxon>Pseudomonadati</taxon>
        <taxon>Pseudomonadota</taxon>
        <taxon>Gammaproteobacteria</taxon>
        <taxon>Thiotrichales</taxon>
        <taxon>Francisellaceae</taxon>
        <taxon>Francisella</taxon>
    </lineage>
</organism>
<comment type="function">
    <text evidence="1">Catalyzes the NADPH-dependent reduction of L-glutamate 5-phosphate into L-glutamate 5-semialdehyde and phosphate. The product spontaneously undergoes cyclization to form 1-pyrroline-5-carboxylate.</text>
</comment>
<comment type="catalytic activity">
    <reaction evidence="1">
        <text>L-glutamate 5-semialdehyde + phosphate + NADP(+) = L-glutamyl 5-phosphate + NADPH + H(+)</text>
        <dbReference type="Rhea" id="RHEA:19541"/>
        <dbReference type="ChEBI" id="CHEBI:15378"/>
        <dbReference type="ChEBI" id="CHEBI:43474"/>
        <dbReference type="ChEBI" id="CHEBI:57783"/>
        <dbReference type="ChEBI" id="CHEBI:58066"/>
        <dbReference type="ChEBI" id="CHEBI:58274"/>
        <dbReference type="ChEBI" id="CHEBI:58349"/>
        <dbReference type="EC" id="1.2.1.41"/>
    </reaction>
</comment>
<comment type="pathway">
    <text evidence="1">Amino-acid biosynthesis; L-proline biosynthesis; L-glutamate 5-semialdehyde from L-glutamate: step 2/2.</text>
</comment>
<comment type="subcellular location">
    <subcellularLocation>
        <location evidence="1">Cytoplasm</location>
    </subcellularLocation>
</comment>
<comment type="similarity">
    <text evidence="1">Belongs to the gamma-glutamyl phosphate reductase family.</text>
</comment>
<comment type="sequence caution" evidence="2">
    <conflict type="erroneous initiation">
        <sequence resource="EMBL-CDS" id="ABZ86827"/>
    </conflict>
</comment>
<keyword id="KW-0028">Amino-acid biosynthesis</keyword>
<keyword id="KW-0963">Cytoplasm</keyword>
<keyword id="KW-0521">NADP</keyword>
<keyword id="KW-0560">Oxidoreductase</keyword>
<keyword id="KW-0641">Proline biosynthesis</keyword>
<protein>
    <recommendedName>
        <fullName evidence="1">Gamma-glutamyl phosphate reductase</fullName>
        <shortName evidence="1">GPR</shortName>
        <ecNumber evidence="1">1.2.1.41</ecNumber>
    </recommendedName>
    <alternativeName>
        <fullName evidence="1">Glutamate-5-semialdehyde dehydrogenase</fullName>
    </alternativeName>
    <alternativeName>
        <fullName evidence="1">Glutamyl-gamma-semialdehyde dehydrogenase</fullName>
        <shortName evidence="1">GSA dehydrogenase</shortName>
    </alternativeName>
</protein>
<dbReference type="EC" id="1.2.1.41" evidence="1"/>
<dbReference type="EMBL" id="CP000937">
    <property type="protein sequence ID" value="ABZ86827.1"/>
    <property type="status" value="ALT_INIT"/>
    <property type="molecule type" value="Genomic_DNA"/>
</dbReference>
<dbReference type="SMR" id="B0U111"/>
<dbReference type="KEGG" id="fph:Fphi_0608"/>
<dbReference type="eggNOG" id="COG0014">
    <property type="taxonomic scope" value="Bacteria"/>
</dbReference>
<dbReference type="HOGENOM" id="CLU_030231_0_0_6"/>
<dbReference type="UniPathway" id="UPA00098">
    <property type="reaction ID" value="UER00360"/>
</dbReference>
<dbReference type="GO" id="GO:0005737">
    <property type="term" value="C:cytoplasm"/>
    <property type="evidence" value="ECO:0007669"/>
    <property type="project" value="UniProtKB-SubCell"/>
</dbReference>
<dbReference type="GO" id="GO:0004350">
    <property type="term" value="F:glutamate-5-semialdehyde dehydrogenase activity"/>
    <property type="evidence" value="ECO:0007669"/>
    <property type="project" value="UniProtKB-UniRule"/>
</dbReference>
<dbReference type="GO" id="GO:0050661">
    <property type="term" value="F:NADP binding"/>
    <property type="evidence" value="ECO:0007669"/>
    <property type="project" value="InterPro"/>
</dbReference>
<dbReference type="GO" id="GO:0055129">
    <property type="term" value="P:L-proline biosynthetic process"/>
    <property type="evidence" value="ECO:0007669"/>
    <property type="project" value="UniProtKB-UniRule"/>
</dbReference>
<dbReference type="CDD" id="cd07079">
    <property type="entry name" value="ALDH_F18-19_ProA-GPR"/>
    <property type="match status" value="1"/>
</dbReference>
<dbReference type="FunFam" id="3.40.309.10:FF:000006">
    <property type="entry name" value="Gamma-glutamyl phosphate reductase"/>
    <property type="match status" value="1"/>
</dbReference>
<dbReference type="Gene3D" id="3.40.605.10">
    <property type="entry name" value="Aldehyde Dehydrogenase, Chain A, domain 1"/>
    <property type="match status" value="1"/>
</dbReference>
<dbReference type="Gene3D" id="3.40.309.10">
    <property type="entry name" value="Aldehyde Dehydrogenase, Chain A, domain 2"/>
    <property type="match status" value="1"/>
</dbReference>
<dbReference type="HAMAP" id="MF_00412">
    <property type="entry name" value="ProA"/>
    <property type="match status" value="1"/>
</dbReference>
<dbReference type="InterPro" id="IPR016161">
    <property type="entry name" value="Ald_DH/histidinol_DH"/>
</dbReference>
<dbReference type="InterPro" id="IPR016163">
    <property type="entry name" value="Ald_DH_C"/>
</dbReference>
<dbReference type="InterPro" id="IPR016162">
    <property type="entry name" value="Ald_DH_N"/>
</dbReference>
<dbReference type="InterPro" id="IPR015590">
    <property type="entry name" value="Aldehyde_DH_dom"/>
</dbReference>
<dbReference type="InterPro" id="IPR020593">
    <property type="entry name" value="G-glutamylP_reductase_CS"/>
</dbReference>
<dbReference type="InterPro" id="IPR012134">
    <property type="entry name" value="Glu-5-SA_DH"/>
</dbReference>
<dbReference type="InterPro" id="IPR000965">
    <property type="entry name" value="GPR_dom"/>
</dbReference>
<dbReference type="NCBIfam" id="NF001221">
    <property type="entry name" value="PRK00197.1"/>
    <property type="match status" value="1"/>
</dbReference>
<dbReference type="NCBIfam" id="TIGR00407">
    <property type="entry name" value="proA"/>
    <property type="match status" value="1"/>
</dbReference>
<dbReference type="PANTHER" id="PTHR11063:SF8">
    <property type="entry name" value="DELTA-1-PYRROLINE-5-CARBOXYLATE SYNTHASE"/>
    <property type="match status" value="1"/>
</dbReference>
<dbReference type="PANTHER" id="PTHR11063">
    <property type="entry name" value="GLUTAMATE SEMIALDEHYDE DEHYDROGENASE"/>
    <property type="match status" value="1"/>
</dbReference>
<dbReference type="Pfam" id="PF00171">
    <property type="entry name" value="Aldedh"/>
    <property type="match status" value="1"/>
</dbReference>
<dbReference type="PIRSF" id="PIRSF000151">
    <property type="entry name" value="GPR"/>
    <property type="match status" value="1"/>
</dbReference>
<dbReference type="SUPFAM" id="SSF53720">
    <property type="entry name" value="ALDH-like"/>
    <property type="match status" value="1"/>
</dbReference>
<dbReference type="PROSITE" id="PS01223">
    <property type="entry name" value="PROA"/>
    <property type="match status" value="1"/>
</dbReference>
<name>PROA_FRAP2</name>